<accession>Q5D013</accession>
<protein>
    <recommendedName>
        <fullName evidence="2">EEF1A lysine methyltransferase 2</fullName>
        <ecNumber evidence="2">2.1.1.-</ecNumber>
    </recommendedName>
    <alternativeName>
        <fullName evidence="2">Methyltransferase-like protein 10</fullName>
    </alternativeName>
    <alternativeName>
        <fullName evidence="2">Protein-lysine N-methyltransferase mettl10</fullName>
    </alternativeName>
</protein>
<keyword id="KW-0963">Cytoplasm</keyword>
<keyword id="KW-0489">Methyltransferase</keyword>
<keyword id="KW-0539">Nucleus</keyword>
<keyword id="KW-1185">Reference proteome</keyword>
<keyword id="KW-0949">S-adenosyl-L-methionine</keyword>
<keyword id="KW-0808">Transferase</keyword>
<dbReference type="EC" id="2.1.1.-" evidence="2"/>
<dbReference type="EMBL" id="BC090299">
    <property type="protein sequence ID" value="AAH90299.1"/>
    <property type="molecule type" value="mRNA"/>
</dbReference>
<dbReference type="RefSeq" id="NP_001013345.1">
    <property type="nucleotide sequence ID" value="NM_001013327.1"/>
</dbReference>
<dbReference type="SMR" id="Q5D013"/>
<dbReference type="FunCoup" id="Q5D013">
    <property type="interactions" value="1852"/>
</dbReference>
<dbReference type="STRING" id="7955.ENSDARP00000148805"/>
<dbReference type="PaxDb" id="7955-ENSDARP00000108342"/>
<dbReference type="GeneID" id="503749"/>
<dbReference type="KEGG" id="dre:503749"/>
<dbReference type="AGR" id="ZFIN:ZDB-GENE-050306-30"/>
<dbReference type="CTD" id="399818"/>
<dbReference type="ZFIN" id="ZDB-GENE-050306-30">
    <property type="gene designation" value="eef1akmt2"/>
</dbReference>
<dbReference type="eggNOG" id="KOG1271">
    <property type="taxonomic scope" value="Eukaryota"/>
</dbReference>
<dbReference type="InParanoid" id="Q5D013"/>
<dbReference type="OrthoDB" id="540004at2759"/>
<dbReference type="PhylomeDB" id="Q5D013"/>
<dbReference type="Reactome" id="R-DRE-8876725">
    <property type="pathway name" value="Protein methylation"/>
</dbReference>
<dbReference type="PRO" id="PR:Q5D013"/>
<dbReference type="Proteomes" id="UP000000437">
    <property type="component" value="Chromosome 17"/>
</dbReference>
<dbReference type="GO" id="GO:0005737">
    <property type="term" value="C:cytoplasm"/>
    <property type="evidence" value="ECO:0000250"/>
    <property type="project" value="UniProtKB"/>
</dbReference>
<dbReference type="GO" id="GO:0005634">
    <property type="term" value="C:nucleus"/>
    <property type="evidence" value="ECO:0000250"/>
    <property type="project" value="UniProtKB"/>
</dbReference>
<dbReference type="GO" id="GO:0008168">
    <property type="term" value="F:methyltransferase activity"/>
    <property type="evidence" value="ECO:0000250"/>
    <property type="project" value="UniProtKB"/>
</dbReference>
<dbReference type="GO" id="GO:0016279">
    <property type="term" value="F:protein-lysine N-methyltransferase activity"/>
    <property type="evidence" value="ECO:0000250"/>
    <property type="project" value="UniProtKB"/>
</dbReference>
<dbReference type="GO" id="GO:0018022">
    <property type="term" value="P:peptidyl-lysine methylation"/>
    <property type="evidence" value="ECO:0000250"/>
    <property type="project" value="UniProtKB"/>
</dbReference>
<dbReference type="CDD" id="cd02440">
    <property type="entry name" value="AdoMet_MTases"/>
    <property type="match status" value="1"/>
</dbReference>
<dbReference type="FunFam" id="3.40.50.150:FF:000172">
    <property type="entry name" value="EEF1A lysine methyltransferase 2"/>
    <property type="match status" value="1"/>
</dbReference>
<dbReference type="Gene3D" id="3.40.50.150">
    <property type="entry name" value="Vaccinia Virus protein VP39"/>
    <property type="match status" value="1"/>
</dbReference>
<dbReference type="HAMAP" id="MF_03188">
    <property type="entry name" value="Methyltr_EFM4"/>
    <property type="match status" value="1"/>
</dbReference>
<dbReference type="InterPro" id="IPR026635">
    <property type="entry name" value="Efm4/METTL10"/>
</dbReference>
<dbReference type="InterPro" id="IPR025714">
    <property type="entry name" value="Methyltranfer_dom"/>
</dbReference>
<dbReference type="InterPro" id="IPR029063">
    <property type="entry name" value="SAM-dependent_MTases_sf"/>
</dbReference>
<dbReference type="PANTHER" id="PTHR12843:SF5">
    <property type="entry name" value="EEF1A LYSINE METHYLTRANSFERASE 2"/>
    <property type="match status" value="1"/>
</dbReference>
<dbReference type="PANTHER" id="PTHR12843">
    <property type="entry name" value="PROTEIN-LYSINE N-METHYLTRANSFERASE METTL10"/>
    <property type="match status" value="1"/>
</dbReference>
<dbReference type="Pfam" id="PF13847">
    <property type="entry name" value="Methyltransf_31"/>
    <property type="match status" value="1"/>
</dbReference>
<dbReference type="SUPFAM" id="SSF53335">
    <property type="entry name" value="S-adenosyl-L-methionine-dependent methyltransferases"/>
    <property type="match status" value="1"/>
</dbReference>
<organism>
    <name type="scientific">Danio rerio</name>
    <name type="common">Zebrafish</name>
    <name type="synonym">Brachydanio rerio</name>
    <dbReference type="NCBI Taxonomy" id="7955"/>
    <lineage>
        <taxon>Eukaryota</taxon>
        <taxon>Metazoa</taxon>
        <taxon>Chordata</taxon>
        <taxon>Craniata</taxon>
        <taxon>Vertebrata</taxon>
        <taxon>Euteleostomi</taxon>
        <taxon>Actinopterygii</taxon>
        <taxon>Neopterygii</taxon>
        <taxon>Teleostei</taxon>
        <taxon>Ostariophysi</taxon>
        <taxon>Cypriniformes</taxon>
        <taxon>Danionidae</taxon>
        <taxon>Danioninae</taxon>
        <taxon>Danio</taxon>
    </lineage>
</organism>
<evidence type="ECO:0000250" key="1">
    <source>
        <dbReference type="UniProtKB" id="Q5JPI9"/>
    </source>
</evidence>
<evidence type="ECO:0000255" key="2">
    <source>
        <dbReference type="HAMAP-Rule" id="MF_03188"/>
    </source>
</evidence>
<proteinExistence type="evidence at transcript level"/>
<reference key="1">
    <citation type="submission" date="2005-02" db="EMBL/GenBank/DDBJ databases">
        <authorList>
            <consortium name="NIH - Zebrafish Gene Collection (ZGC) project"/>
        </authorList>
    </citation>
    <scope>NUCLEOTIDE SEQUENCE [LARGE SCALE MRNA]</scope>
    <source>
        <tissue>Embryo</tissue>
    </source>
</reference>
<sequence>MNSSVSTHGTGDCPVNCTKSEDFAPSKLGTKEYWDGAYKRELQTYKDIGDVGEIWFGEESMHRVIRWMEAQNISENAAILDIGTGNGMFLVELARHGFSNLTGIDYSKAALELTTNILVEEGLKNINIQVEDFLNPSTELKGFDVCIDKGTFDAISLNPEDREEAKKHYVTSLRAVMRPNGFFIITSCNWTKEQLLEIFKPGFELVRELPTPNFQFGGVTGNSVTALVFKQTD</sequence>
<comment type="function">
    <text evidence="2">Protein-lysine methyltransferase that selectively catalyzes the trimethylation of EEF1A at 'Lys-318'.</text>
</comment>
<comment type="catalytic activity">
    <reaction evidence="1">
        <text>L-lysyl-[protein] + 3 S-adenosyl-L-methionine = N(6),N(6),N(6)-trimethyl-L-lysyl-[protein] + 3 S-adenosyl-L-homocysteine + 3 H(+)</text>
        <dbReference type="Rhea" id="RHEA:54192"/>
        <dbReference type="Rhea" id="RHEA-COMP:9752"/>
        <dbReference type="Rhea" id="RHEA-COMP:13826"/>
        <dbReference type="ChEBI" id="CHEBI:15378"/>
        <dbReference type="ChEBI" id="CHEBI:29969"/>
        <dbReference type="ChEBI" id="CHEBI:57856"/>
        <dbReference type="ChEBI" id="CHEBI:59789"/>
        <dbReference type="ChEBI" id="CHEBI:61961"/>
    </reaction>
    <physiologicalReaction direction="left-to-right" evidence="1">
        <dbReference type="Rhea" id="RHEA:54193"/>
    </physiologicalReaction>
</comment>
<comment type="subcellular location">
    <subcellularLocation>
        <location evidence="2">Cytoplasm</location>
    </subcellularLocation>
    <subcellularLocation>
        <location evidence="2">Nucleus</location>
    </subcellularLocation>
</comment>
<comment type="similarity">
    <text evidence="2">Belongs to the class I-like SAM-binding methyltransferase superfamily. EFM4 family.</text>
</comment>
<gene>
    <name evidence="2" type="primary">eef1akmt2</name>
    <name evidence="2" type="synonym">mettl10</name>
    <name type="ORF">zgc:110805</name>
</gene>
<feature type="chain" id="PRO_0000325884" description="EEF1A lysine methyltransferase 2">
    <location>
        <begin position="1"/>
        <end position="233"/>
    </location>
</feature>
<name>EFMT2_DANRE</name>